<reference key="1">
    <citation type="submission" date="2006-09" db="EMBL/GenBank/DDBJ databases">
        <title>Complete sequence of chromosome 1 of Shewanella sp. ANA-3.</title>
        <authorList>
            <person name="Copeland A."/>
            <person name="Lucas S."/>
            <person name="Lapidus A."/>
            <person name="Barry K."/>
            <person name="Detter J.C."/>
            <person name="Glavina del Rio T."/>
            <person name="Hammon N."/>
            <person name="Israni S."/>
            <person name="Dalin E."/>
            <person name="Tice H."/>
            <person name="Pitluck S."/>
            <person name="Chertkov O."/>
            <person name="Brettin T."/>
            <person name="Bruce D."/>
            <person name="Han C."/>
            <person name="Tapia R."/>
            <person name="Gilna P."/>
            <person name="Schmutz J."/>
            <person name="Larimer F."/>
            <person name="Land M."/>
            <person name="Hauser L."/>
            <person name="Kyrpides N."/>
            <person name="Kim E."/>
            <person name="Newman D."/>
            <person name="Salticov C."/>
            <person name="Konstantinidis K."/>
            <person name="Klappenback J."/>
            <person name="Tiedje J."/>
            <person name="Richardson P."/>
        </authorList>
    </citation>
    <scope>NUCLEOTIDE SEQUENCE [LARGE SCALE GENOMIC DNA]</scope>
    <source>
        <strain>ANA-3</strain>
    </source>
</reference>
<keyword id="KW-0963">Cytoplasm</keyword>
<keyword id="KW-0378">Hydrolase</keyword>
<keyword id="KW-0645">Protease</keyword>
<keyword id="KW-0720">Serine protease</keyword>
<proteinExistence type="inferred from homology"/>
<gene>
    <name evidence="1" type="primary">clpP</name>
    <name type="ordered locus">Shewana3_2661</name>
</gene>
<accession>A0KYL9</accession>
<evidence type="ECO:0000255" key="1">
    <source>
        <dbReference type="HAMAP-Rule" id="MF_00444"/>
    </source>
</evidence>
<name>CLPP_SHESA</name>
<dbReference type="EC" id="3.4.21.92" evidence="1"/>
<dbReference type="EMBL" id="CP000469">
    <property type="protein sequence ID" value="ABK48888.1"/>
    <property type="molecule type" value="Genomic_DNA"/>
</dbReference>
<dbReference type="RefSeq" id="WP_011717550.1">
    <property type="nucleotide sequence ID" value="NC_008577.1"/>
</dbReference>
<dbReference type="SMR" id="A0KYL9"/>
<dbReference type="STRING" id="94122.Shewana3_2661"/>
<dbReference type="MEROPS" id="S14.001"/>
<dbReference type="GeneID" id="94728603"/>
<dbReference type="KEGG" id="shn:Shewana3_2661"/>
<dbReference type="eggNOG" id="COG0740">
    <property type="taxonomic scope" value="Bacteria"/>
</dbReference>
<dbReference type="HOGENOM" id="CLU_058707_3_2_6"/>
<dbReference type="OrthoDB" id="9802800at2"/>
<dbReference type="Proteomes" id="UP000002589">
    <property type="component" value="Chromosome"/>
</dbReference>
<dbReference type="GO" id="GO:0005737">
    <property type="term" value="C:cytoplasm"/>
    <property type="evidence" value="ECO:0007669"/>
    <property type="project" value="UniProtKB-SubCell"/>
</dbReference>
<dbReference type="GO" id="GO:0009368">
    <property type="term" value="C:endopeptidase Clp complex"/>
    <property type="evidence" value="ECO:0007669"/>
    <property type="project" value="TreeGrafter"/>
</dbReference>
<dbReference type="GO" id="GO:0004176">
    <property type="term" value="F:ATP-dependent peptidase activity"/>
    <property type="evidence" value="ECO:0007669"/>
    <property type="project" value="InterPro"/>
</dbReference>
<dbReference type="GO" id="GO:0051117">
    <property type="term" value="F:ATPase binding"/>
    <property type="evidence" value="ECO:0007669"/>
    <property type="project" value="TreeGrafter"/>
</dbReference>
<dbReference type="GO" id="GO:0004252">
    <property type="term" value="F:serine-type endopeptidase activity"/>
    <property type="evidence" value="ECO:0007669"/>
    <property type="project" value="UniProtKB-UniRule"/>
</dbReference>
<dbReference type="GO" id="GO:0006515">
    <property type="term" value="P:protein quality control for misfolded or incompletely synthesized proteins"/>
    <property type="evidence" value="ECO:0007669"/>
    <property type="project" value="TreeGrafter"/>
</dbReference>
<dbReference type="CDD" id="cd07017">
    <property type="entry name" value="S14_ClpP_2"/>
    <property type="match status" value="1"/>
</dbReference>
<dbReference type="FunFam" id="3.90.226.10:FF:000001">
    <property type="entry name" value="ATP-dependent Clp protease proteolytic subunit"/>
    <property type="match status" value="1"/>
</dbReference>
<dbReference type="Gene3D" id="3.90.226.10">
    <property type="entry name" value="2-enoyl-CoA Hydratase, Chain A, domain 1"/>
    <property type="match status" value="1"/>
</dbReference>
<dbReference type="HAMAP" id="MF_00444">
    <property type="entry name" value="ClpP"/>
    <property type="match status" value="1"/>
</dbReference>
<dbReference type="InterPro" id="IPR001907">
    <property type="entry name" value="ClpP"/>
</dbReference>
<dbReference type="InterPro" id="IPR029045">
    <property type="entry name" value="ClpP/crotonase-like_dom_sf"/>
</dbReference>
<dbReference type="InterPro" id="IPR023562">
    <property type="entry name" value="ClpP/TepA"/>
</dbReference>
<dbReference type="InterPro" id="IPR033135">
    <property type="entry name" value="ClpP_His_AS"/>
</dbReference>
<dbReference type="InterPro" id="IPR018215">
    <property type="entry name" value="ClpP_Ser_AS"/>
</dbReference>
<dbReference type="NCBIfam" id="TIGR00493">
    <property type="entry name" value="clpP"/>
    <property type="match status" value="1"/>
</dbReference>
<dbReference type="NCBIfam" id="NF001368">
    <property type="entry name" value="PRK00277.1"/>
    <property type="match status" value="1"/>
</dbReference>
<dbReference type="NCBIfam" id="NF009205">
    <property type="entry name" value="PRK12553.1"/>
    <property type="match status" value="1"/>
</dbReference>
<dbReference type="PANTHER" id="PTHR10381">
    <property type="entry name" value="ATP-DEPENDENT CLP PROTEASE PROTEOLYTIC SUBUNIT"/>
    <property type="match status" value="1"/>
</dbReference>
<dbReference type="PANTHER" id="PTHR10381:SF70">
    <property type="entry name" value="ATP-DEPENDENT CLP PROTEASE PROTEOLYTIC SUBUNIT"/>
    <property type="match status" value="1"/>
</dbReference>
<dbReference type="Pfam" id="PF00574">
    <property type="entry name" value="CLP_protease"/>
    <property type="match status" value="1"/>
</dbReference>
<dbReference type="PRINTS" id="PR00127">
    <property type="entry name" value="CLPPROTEASEP"/>
</dbReference>
<dbReference type="SUPFAM" id="SSF52096">
    <property type="entry name" value="ClpP/crotonase"/>
    <property type="match status" value="1"/>
</dbReference>
<dbReference type="PROSITE" id="PS00382">
    <property type="entry name" value="CLP_PROTEASE_HIS"/>
    <property type="match status" value="1"/>
</dbReference>
<dbReference type="PROSITE" id="PS00381">
    <property type="entry name" value="CLP_PROTEASE_SER"/>
    <property type="match status" value="1"/>
</dbReference>
<protein>
    <recommendedName>
        <fullName evidence="1">ATP-dependent Clp protease proteolytic subunit</fullName>
        <ecNumber evidence="1">3.4.21.92</ecNumber>
    </recommendedName>
    <alternativeName>
        <fullName evidence="1">Endopeptidase Clp</fullName>
    </alternativeName>
</protein>
<sequence>MHNASDIQSALVPMVIEQTAKGERSFDIYSRLLKERIIFLVGQVEEHMANLIVAQLLFLESESPDKDIFLYINSPGGSVTAGMAIYDTMQFIKPNVSTVCIGQAASMGAFLLAGGEKGKRFCLPNSRVMIHQPLGGFQGQASDIAIHAQEILGIKHKLNLMLSEHTGQPLEVIERDTDRDNFMSATQAVEYGLVDAVMTKRG</sequence>
<organism>
    <name type="scientific">Shewanella sp. (strain ANA-3)</name>
    <dbReference type="NCBI Taxonomy" id="94122"/>
    <lineage>
        <taxon>Bacteria</taxon>
        <taxon>Pseudomonadati</taxon>
        <taxon>Pseudomonadota</taxon>
        <taxon>Gammaproteobacteria</taxon>
        <taxon>Alteromonadales</taxon>
        <taxon>Shewanellaceae</taxon>
        <taxon>Shewanella</taxon>
    </lineage>
</organism>
<feature type="chain" id="PRO_1000026128" description="ATP-dependent Clp protease proteolytic subunit">
    <location>
        <begin position="1"/>
        <end position="202"/>
    </location>
</feature>
<feature type="active site" description="Nucleophile" evidence="1">
    <location>
        <position position="106"/>
    </location>
</feature>
<feature type="active site" evidence="1">
    <location>
        <position position="131"/>
    </location>
</feature>
<comment type="function">
    <text evidence="1">Cleaves peptides in various proteins in a process that requires ATP hydrolysis. Has a chymotrypsin-like activity. Plays a major role in the degradation of misfolded proteins.</text>
</comment>
<comment type="catalytic activity">
    <reaction evidence="1">
        <text>Hydrolysis of proteins to small peptides in the presence of ATP and magnesium. alpha-casein is the usual test substrate. In the absence of ATP, only oligopeptides shorter than five residues are hydrolyzed (such as succinyl-Leu-Tyr-|-NHMec, and Leu-Tyr-Leu-|-Tyr-Trp, in which cleavage of the -Tyr-|-Leu- and -Tyr-|-Trp bonds also occurs).</text>
        <dbReference type="EC" id="3.4.21.92"/>
    </reaction>
</comment>
<comment type="subunit">
    <text evidence="1">Fourteen ClpP subunits assemble into 2 heptameric rings which stack back to back to give a disk-like structure with a central cavity, resembling the structure of eukaryotic proteasomes.</text>
</comment>
<comment type="subcellular location">
    <subcellularLocation>
        <location evidence="1">Cytoplasm</location>
    </subcellularLocation>
</comment>
<comment type="similarity">
    <text evidence="1">Belongs to the peptidase S14 family.</text>
</comment>